<accession>Q6ANL7</accession>
<organism>
    <name type="scientific">Desulfotalea psychrophila (strain LSv54 / DSM 12343)</name>
    <dbReference type="NCBI Taxonomy" id="177439"/>
    <lineage>
        <taxon>Bacteria</taxon>
        <taxon>Pseudomonadati</taxon>
        <taxon>Thermodesulfobacteriota</taxon>
        <taxon>Desulfobulbia</taxon>
        <taxon>Desulfobulbales</taxon>
        <taxon>Desulfocapsaceae</taxon>
        <taxon>Desulfotalea</taxon>
    </lineage>
</organism>
<protein>
    <recommendedName>
        <fullName evidence="1">Imidazoleglycerol-phosphate dehydratase</fullName>
        <shortName evidence="1">IGPD</shortName>
        <ecNumber evidence="1">4.2.1.19</ecNumber>
    </recommendedName>
</protein>
<sequence length="199" mass="21718">MVVIEKNRKSAISRKTTETDIQLELNLDGAGQHLIDTGVPFLNHMLTLFSVHGFLDLSLRAEGDIDIDDHHTTEDIGIVLGQAIAQALGNKGGISRYASVYLPMDEALVRIVIDLSNRPYLHYNAPVIEQKLGTFDSCLVKEFFRAVSQQAGMTLHIDMIHGENGHHIVEAIFKGFGRALSLAIEPLGTDGALSSKGCL</sequence>
<proteinExistence type="inferred from homology"/>
<evidence type="ECO:0000255" key="1">
    <source>
        <dbReference type="HAMAP-Rule" id="MF_00076"/>
    </source>
</evidence>
<keyword id="KW-0028">Amino-acid biosynthesis</keyword>
<keyword id="KW-0963">Cytoplasm</keyword>
<keyword id="KW-0368">Histidine biosynthesis</keyword>
<keyword id="KW-0456">Lyase</keyword>
<keyword id="KW-1185">Reference proteome</keyword>
<dbReference type="EC" id="4.2.1.19" evidence="1"/>
<dbReference type="EMBL" id="CR522870">
    <property type="protein sequence ID" value="CAG36057.1"/>
    <property type="molecule type" value="Genomic_DNA"/>
</dbReference>
<dbReference type="RefSeq" id="WP_011188569.1">
    <property type="nucleotide sequence ID" value="NC_006138.1"/>
</dbReference>
<dbReference type="SMR" id="Q6ANL7"/>
<dbReference type="STRING" id="177439.DP1328"/>
<dbReference type="KEGG" id="dps:DP1328"/>
<dbReference type="eggNOG" id="COG0131">
    <property type="taxonomic scope" value="Bacteria"/>
</dbReference>
<dbReference type="HOGENOM" id="CLU_044308_3_0_7"/>
<dbReference type="OrthoDB" id="9790411at2"/>
<dbReference type="UniPathway" id="UPA00031">
    <property type="reaction ID" value="UER00011"/>
</dbReference>
<dbReference type="Proteomes" id="UP000000602">
    <property type="component" value="Chromosome"/>
</dbReference>
<dbReference type="GO" id="GO:0005737">
    <property type="term" value="C:cytoplasm"/>
    <property type="evidence" value="ECO:0007669"/>
    <property type="project" value="UniProtKB-SubCell"/>
</dbReference>
<dbReference type="GO" id="GO:0004424">
    <property type="term" value="F:imidazoleglycerol-phosphate dehydratase activity"/>
    <property type="evidence" value="ECO:0007669"/>
    <property type="project" value="UniProtKB-UniRule"/>
</dbReference>
<dbReference type="GO" id="GO:0000105">
    <property type="term" value="P:L-histidine biosynthetic process"/>
    <property type="evidence" value="ECO:0007669"/>
    <property type="project" value="UniProtKB-UniRule"/>
</dbReference>
<dbReference type="CDD" id="cd07914">
    <property type="entry name" value="IGPD"/>
    <property type="match status" value="1"/>
</dbReference>
<dbReference type="FunFam" id="3.30.230.40:FF:000001">
    <property type="entry name" value="Imidazoleglycerol-phosphate dehydratase HisB"/>
    <property type="match status" value="1"/>
</dbReference>
<dbReference type="FunFam" id="3.30.230.40:FF:000003">
    <property type="entry name" value="Imidazoleglycerol-phosphate dehydratase HisB"/>
    <property type="match status" value="1"/>
</dbReference>
<dbReference type="Gene3D" id="3.30.230.40">
    <property type="entry name" value="Imidazole glycerol phosphate dehydratase, domain 1"/>
    <property type="match status" value="2"/>
</dbReference>
<dbReference type="HAMAP" id="MF_00076">
    <property type="entry name" value="HisB"/>
    <property type="match status" value="1"/>
</dbReference>
<dbReference type="InterPro" id="IPR038494">
    <property type="entry name" value="IGPD_sf"/>
</dbReference>
<dbReference type="InterPro" id="IPR000807">
    <property type="entry name" value="ImidazoleglycerolP_deHydtase"/>
</dbReference>
<dbReference type="InterPro" id="IPR020565">
    <property type="entry name" value="ImidazoleglycerP_deHydtase_CS"/>
</dbReference>
<dbReference type="InterPro" id="IPR020568">
    <property type="entry name" value="Ribosomal_Su5_D2-typ_SF"/>
</dbReference>
<dbReference type="NCBIfam" id="NF002111">
    <property type="entry name" value="PRK00951.2-1"/>
    <property type="match status" value="1"/>
</dbReference>
<dbReference type="NCBIfam" id="NF002114">
    <property type="entry name" value="PRK00951.2-4"/>
    <property type="match status" value="1"/>
</dbReference>
<dbReference type="PANTHER" id="PTHR23133:SF2">
    <property type="entry name" value="IMIDAZOLEGLYCEROL-PHOSPHATE DEHYDRATASE"/>
    <property type="match status" value="1"/>
</dbReference>
<dbReference type="PANTHER" id="PTHR23133">
    <property type="entry name" value="IMIDAZOLEGLYCEROL-PHOSPHATE DEHYDRATASE HIS7"/>
    <property type="match status" value="1"/>
</dbReference>
<dbReference type="Pfam" id="PF00475">
    <property type="entry name" value="IGPD"/>
    <property type="match status" value="1"/>
</dbReference>
<dbReference type="SUPFAM" id="SSF54211">
    <property type="entry name" value="Ribosomal protein S5 domain 2-like"/>
    <property type="match status" value="2"/>
</dbReference>
<dbReference type="PROSITE" id="PS00954">
    <property type="entry name" value="IGP_DEHYDRATASE_1"/>
    <property type="match status" value="1"/>
</dbReference>
<dbReference type="PROSITE" id="PS00955">
    <property type="entry name" value="IGP_DEHYDRATASE_2"/>
    <property type="match status" value="1"/>
</dbReference>
<reference key="1">
    <citation type="journal article" date="2004" name="Environ. Microbiol.">
        <title>The genome of Desulfotalea psychrophila, a sulfate-reducing bacterium from permanently cold Arctic sediments.</title>
        <authorList>
            <person name="Rabus R."/>
            <person name="Ruepp A."/>
            <person name="Frickey T."/>
            <person name="Rattei T."/>
            <person name="Fartmann B."/>
            <person name="Stark M."/>
            <person name="Bauer M."/>
            <person name="Zibat A."/>
            <person name="Lombardot T."/>
            <person name="Becker I."/>
            <person name="Amann J."/>
            <person name="Gellner K."/>
            <person name="Teeling H."/>
            <person name="Leuschner W.D."/>
            <person name="Gloeckner F.-O."/>
            <person name="Lupas A.N."/>
            <person name="Amann R."/>
            <person name="Klenk H.-P."/>
        </authorList>
    </citation>
    <scope>NUCLEOTIDE SEQUENCE [LARGE SCALE GENOMIC DNA]</scope>
    <source>
        <strain>DSM 12343 / LSv54</strain>
    </source>
</reference>
<gene>
    <name evidence="1" type="primary">hisB</name>
    <name type="ordered locus">DP1328</name>
</gene>
<name>HIS7_DESPS</name>
<comment type="catalytic activity">
    <reaction evidence="1">
        <text>D-erythro-1-(imidazol-4-yl)glycerol 3-phosphate = 3-(imidazol-4-yl)-2-oxopropyl phosphate + H2O</text>
        <dbReference type="Rhea" id="RHEA:11040"/>
        <dbReference type="ChEBI" id="CHEBI:15377"/>
        <dbReference type="ChEBI" id="CHEBI:57766"/>
        <dbReference type="ChEBI" id="CHEBI:58278"/>
        <dbReference type="EC" id="4.2.1.19"/>
    </reaction>
</comment>
<comment type="pathway">
    <text evidence="1">Amino-acid biosynthesis; L-histidine biosynthesis; L-histidine from 5-phospho-alpha-D-ribose 1-diphosphate: step 6/9.</text>
</comment>
<comment type="subcellular location">
    <subcellularLocation>
        <location evidence="1">Cytoplasm</location>
    </subcellularLocation>
</comment>
<comment type="similarity">
    <text evidence="1">Belongs to the imidazoleglycerol-phosphate dehydratase family.</text>
</comment>
<feature type="chain" id="PRO_0000158129" description="Imidazoleglycerol-phosphate dehydratase">
    <location>
        <begin position="1"/>
        <end position="199"/>
    </location>
</feature>